<evidence type="ECO:0000250" key="1">
    <source>
        <dbReference type="UniProtKB" id="P0AAB4"/>
    </source>
</evidence>
<evidence type="ECO:0000269" key="2">
    <source>
    </source>
</evidence>
<evidence type="ECO:0000303" key="3">
    <source>
    </source>
</evidence>
<evidence type="ECO:0000305" key="4"/>
<evidence type="ECO:0000305" key="5">
    <source>
    </source>
</evidence>
<evidence type="ECO:0000312" key="6">
    <source>
        <dbReference type="EMBL" id="AAM31222.1"/>
    </source>
</evidence>
<organism>
    <name type="scientific">Methanosarcina mazei (strain ATCC BAA-159 / DSM 3647 / Goe1 / Go1 / JCM 11833 / OCM 88)</name>
    <name type="common">Methanosarcina frisia</name>
    <dbReference type="NCBI Taxonomy" id="192952"/>
    <lineage>
        <taxon>Archaea</taxon>
        <taxon>Methanobacteriati</taxon>
        <taxon>Methanobacteriota</taxon>
        <taxon>Stenosarchaea group</taxon>
        <taxon>Methanomicrobia</taxon>
        <taxon>Methanosarcinales</taxon>
        <taxon>Methanosarcinaceae</taxon>
        <taxon>Methanosarcina</taxon>
    </lineage>
</organism>
<protein>
    <recommendedName>
        <fullName evidence="3">Anhydromevalonate phosphate decarboxylase</fullName>
        <shortName evidence="3">AMPD</shortName>
        <ecNumber evidence="5">4.1.1.126</ecNumber>
    </recommendedName>
</protein>
<name>AMPD_METMA</name>
<dbReference type="EC" id="4.1.1.126" evidence="5"/>
<dbReference type="EMBL" id="AE008384">
    <property type="protein sequence ID" value="AAM31222.1"/>
    <property type="molecule type" value="Genomic_DNA"/>
</dbReference>
<dbReference type="RefSeq" id="WP_011033472.1">
    <property type="nucleotide sequence ID" value="NC_003901.1"/>
</dbReference>
<dbReference type="SMR" id="Q8PWQ0"/>
<dbReference type="KEGG" id="mma:MM_1526"/>
<dbReference type="PATRIC" id="fig|192952.21.peg.1762"/>
<dbReference type="eggNOG" id="arCOG01671">
    <property type="taxonomic scope" value="Archaea"/>
</dbReference>
<dbReference type="HOGENOM" id="CLU_023348_5_1_2"/>
<dbReference type="UniPathway" id="UPA00057"/>
<dbReference type="Proteomes" id="UP000000595">
    <property type="component" value="Chromosome"/>
</dbReference>
<dbReference type="GO" id="GO:0005737">
    <property type="term" value="C:cytoplasm"/>
    <property type="evidence" value="ECO:0007669"/>
    <property type="project" value="TreeGrafter"/>
</dbReference>
<dbReference type="GO" id="GO:0018799">
    <property type="term" value="F:4-hydroxybenzoate decarboxylase activity"/>
    <property type="evidence" value="ECO:0007669"/>
    <property type="project" value="UniProtKB-EC"/>
</dbReference>
<dbReference type="GO" id="GO:0046872">
    <property type="term" value="F:metal ion binding"/>
    <property type="evidence" value="ECO:0007669"/>
    <property type="project" value="UniProtKB-KW"/>
</dbReference>
<dbReference type="GO" id="GO:0008299">
    <property type="term" value="P:isoprenoid biosynthetic process"/>
    <property type="evidence" value="ECO:0007669"/>
    <property type="project" value="UniProtKB-KW"/>
</dbReference>
<dbReference type="FunFam" id="3.40.1670.10:FF:000003">
    <property type="entry name" value="Phenolic acid decarboxylase"/>
    <property type="match status" value="1"/>
</dbReference>
<dbReference type="Gene3D" id="3.40.1670.10">
    <property type="entry name" value="UbiD C-terminal domain-like"/>
    <property type="match status" value="1"/>
</dbReference>
<dbReference type="InterPro" id="IPR002830">
    <property type="entry name" value="UbiD"/>
</dbReference>
<dbReference type="InterPro" id="IPR049381">
    <property type="entry name" value="UbiD-like_C"/>
</dbReference>
<dbReference type="InterPro" id="IPR049383">
    <property type="entry name" value="UbiD-like_N"/>
</dbReference>
<dbReference type="InterPro" id="IPR048304">
    <property type="entry name" value="UbiD_Rift_dom"/>
</dbReference>
<dbReference type="NCBIfam" id="TIGR00148">
    <property type="entry name" value="UbiD family decarboxylase"/>
    <property type="match status" value="1"/>
</dbReference>
<dbReference type="PANTHER" id="PTHR30108">
    <property type="entry name" value="3-OCTAPRENYL-4-HYDROXYBENZOATE CARBOXY-LYASE-RELATED"/>
    <property type="match status" value="1"/>
</dbReference>
<dbReference type="PANTHER" id="PTHR30108:SF21">
    <property type="entry name" value="4-HYDROXYBENZOATE DECARBOXYLASE"/>
    <property type="match status" value="1"/>
</dbReference>
<dbReference type="Pfam" id="PF01977">
    <property type="entry name" value="UbiD"/>
    <property type="match status" value="1"/>
</dbReference>
<dbReference type="Pfam" id="PF20696">
    <property type="entry name" value="UbiD_C"/>
    <property type="match status" value="1"/>
</dbReference>
<dbReference type="Pfam" id="PF20695">
    <property type="entry name" value="UbiD_N"/>
    <property type="match status" value="1"/>
</dbReference>
<dbReference type="SUPFAM" id="SSF50475">
    <property type="entry name" value="FMN-binding split barrel"/>
    <property type="match status" value="1"/>
</dbReference>
<dbReference type="SUPFAM" id="SSF143968">
    <property type="entry name" value="UbiD C-terminal domain-like"/>
    <property type="match status" value="1"/>
</dbReference>
<proteinExistence type="evidence at protein level"/>
<accession>Q8PWQ0</accession>
<reference key="1">
    <citation type="journal article" date="2002" name="J. Mol. Microbiol. Biotechnol.">
        <title>The genome of Methanosarcina mazei: evidence for lateral gene transfer between Bacteria and Archaea.</title>
        <authorList>
            <person name="Deppenmeier U."/>
            <person name="Johann A."/>
            <person name="Hartsch T."/>
            <person name="Merkl R."/>
            <person name="Schmitz R.A."/>
            <person name="Martinez-Arias R."/>
            <person name="Henne A."/>
            <person name="Wiezer A."/>
            <person name="Baeumer S."/>
            <person name="Jacobi C."/>
            <person name="Brueggemann H."/>
            <person name="Lienard T."/>
            <person name="Christmann A."/>
            <person name="Boemecke M."/>
            <person name="Steckel S."/>
            <person name="Bhattacharyya A."/>
            <person name="Lykidis A."/>
            <person name="Overbeek R."/>
            <person name="Klenk H.-P."/>
            <person name="Gunsalus R.P."/>
            <person name="Fritz H.-J."/>
            <person name="Gottschalk G."/>
        </authorList>
    </citation>
    <scope>NUCLEOTIDE SEQUENCE [LARGE SCALE GENOMIC DNA]</scope>
    <source>
        <strain>ATCC BAA-159 / DSM 3647 / Goe1 / Go1 / JCM 11833 / OCM 88</strain>
    </source>
</reference>
<reference key="2">
    <citation type="journal article" date="2020" name="Appl. Environ. Microbiol.">
        <title>Reconstruction of the 'Archaeal' Mevalonate Pathway from the Methanogenic Archaeon Methanosarcina mazei in Escherichia coli Cells.</title>
        <authorList>
            <person name="Yoshida R."/>
            <person name="Yoshimura T."/>
            <person name="Hemmi H."/>
        </authorList>
    </citation>
    <scope>FUNCTION IN MEVALONATE BIOSYNTHESIS</scope>
    <scope>PATHWAY</scope>
    <source>
        <strain>ATCC BAA-159 / DSM 3647 / Goe1 / Go1 / JCM 11833 / OCM 88</strain>
    </source>
</reference>
<feature type="chain" id="PRO_0000460842" description="Anhydromevalonate phosphate decarboxylase">
    <location>
        <begin position="1"/>
        <end position="422"/>
    </location>
</feature>
<feature type="active site" description="Proton acceptor" evidence="1">
    <location>
        <position position="244"/>
    </location>
</feature>
<feature type="binding site" evidence="1">
    <location>
        <position position="134"/>
    </location>
    <ligand>
        <name>Mn(2+)</name>
        <dbReference type="ChEBI" id="CHEBI:29035"/>
    </ligand>
</feature>
<feature type="binding site" evidence="1">
    <location>
        <position position="197"/>
    </location>
    <ligand>
        <name>Mn(2+)</name>
        <dbReference type="ChEBI" id="CHEBI:29035"/>
    </ligand>
</feature>
<keyword id="KW-0210">Decarboxylase</keyword>
<keyword id="KW-0285">Flavoprotein</keyword>
<keyword id="KW-0288">FMN</keyword>
<keyword id="KW-0414">Isoprene biosynthesis</keyword>
<keyword id="KW-0456">Lyase</keyword>
<keyword id="KW-0464">Manganese</keyword>
<keyword id="KW-0479">Metal-binding</keyword>
<gene>
    <name evidence="6" type="ordered locus">MM_1526</name>
</gene>
<comment type="function">
    <text evidence="2 5">Catalyzes the conversion of trans-anhydromevalonate 5-phosphate (tAHMP) into isopentenyl phosphate (Probable). Involved in the archaeal mevalonate (MVA) pathway, which provides fundamental precursors for isoprenoid biosynthesis, such as isopentenyl diphosphate (IPP) and dimethylallyl diphosphate (DMAPP) (PubMed:31924615).</text>
</comment>
<comment type="catalytic activity">
    <reaction evidence="5">
        <text>(2E)-3-methyl-5-phosphooxypent-2-enoate + H(+) = isopentenyl phosphate + CO2</text>
        <dbReference type="Rhea" id="RHEA:78971"/>
        <dbReference type="ChEBI" id="CHEBI:15378"/>
        <dbReference type="ChEBI" id="CHEBI:16526"/>
        <dbReference type="ChEBI" id="CHEBI:65078"/>
        <dbReference type="ChEBI" id="CHEBI:229665"/>
        <dbReference type="EC" id="4.1.1.126"/>
    </reaction>
    <physiologicalReaction direction="left-to-right" evidence="5">
        <dbReference type="Rhea" id="RHEA:78972"/>
    </physiologicalReaction>
</comment>
<comment type="cofactor">
    <cofactor evidence="1">
        <name>prenylated FMN</name>
        <dbReference type="ChEBI" id="CHEBI:87746"/>
    </cofactor>
</comment>
<comment type="cofactor">
    <cofactor evidence="1">
        <name>Mn(2+)</name>
        <dbReference type="ChEBI" id="CHEBI:29035"/>
    </cofactor>
</comment>
<comment type="pathway">
    <text evidence="2">Isoprenoid biosynthesis; isopentenyl diphosphate biosynthesis via mevalonate pathway.</text>
</comment>
<comment type="similarity">
    <text evidence="4">Belongs to the UbiD family.</text>
</comment>
<sequence>MTYRDFIGRLKENGKLVEIQQPVSPIFEASRIAKKTKGPVLFHNVSGSKVIMNLLGSRDELSSMLGVPKEEIIKKLSEVSPEGEVRLVPGSPTLEVIESEVDLTKLPILTHFEKDGAPYITAGIVVSEYEGVMNASIHRLMLVGKDKLAARLVPPRHTYLLHKKAAEKGETLPVAIVLGCDPTIIYATSTRVPAGKEFEYAAALRGTPVEVFECSNGIKVPHSEIILEGYIDTKERVDEGPFVDITGTYDMVRKEPVIHITRIIHRKDPIYHGILPAGPEHLLMMGVPYEPRIYRAVGEVTTVKNVVLTEGGCCYLHAVVQIEKQTEGDAKNAIMAAFAAHTSLKHVVVVDEDINIFDPNDVEFAIATRVKGDMDILTITNVRGSSLDPRGASDGTTTKVGIDATKVLIEKENFERAIIPEE</sequence>